<organism>
    <name type="scientific">Desulforapulum autotrophicum (strain ATCC 43914 / DSM 3382 / VKM B-1955 / HRM2)</name>
    <name type="common">Desulfobacterium autotrophicum</name>
    <dbReference type="NCBI Taxonomy" id="177437"/>
    <lineage>
        <taxon>Bacteria</taxon>
        <taxon>Pseudomonadati</taxon>
        <taxon>Thermodesulfobacteriota</taxon>
        <taxon>Desulfobacteria</taxon>
        <taxon>Desulfobacterales</taxon>
        <taxon>Desulfobacteraceae</taxon>
        <taxon>Desulforapulum</taxon>
    </lineage>
</organism>
<sequence length="227" mass="24705">MFITLEGIEGSGKTTQIKPLVDCLGQNGYEAVVTREPGATVIGKKIRAILLDPGNSGMSDLCELFLYGADRAQHLSEVIIPALGAGKTVVCDRFTDATTVYQGAARGISKELIDIIHSVVVKDLCPDLTILFDLDPETGLARTVKALTDGERTLDESRFERETLEFHERVRQGYLALAAAEQDRFLVVDARGTQEQVFTEIVSGINRRLGIDLVGIDSAMIDPRVKG</sequence>
<comment type="function">
    <text evidence="1">Phosphorylation of dTMP to form dTDP in both de novo and salvage pathways of dTTP synthesis.</text>
</comment>
<comment type="catalytic activity">
    <reaction evidence="1">
        <text>dTMP + ATP = dTDP + ADP</text>
        <dbReference type="Rhea" id="RHEA:13517"/>
        <dbReference type="ChEBI" id="CHEBI:30616"/>
        <dbReference type="ChEBI" id="CHEBI:58369"/>
        <dbReference type="ChEBI" id="CHEBI:63528"/>
        <dbReference type="ChEBI" id="CHEBI:456216"/>
        <dbReference type="EC" id="2.7.4.9"/>
    </reaction>
</comment>
<comment type="similarity">
    <text evidence="1">Belongs to the thymidylate kinase family.</text>
</comment>
<proteinExistence type="inferred from homology"/>
<gene>
    <name evidence="1" type="primary">tmk</name>
    <name type="ordered locus">HRM2_26750</name>
</gene>
<name>KTHY_DESAH</name>
<feature type="chain" id="PRO_1000203612" description="Thymidylate kinase">
    <location>
        <begin position="1"/>
        <end position="227"/>
    </location>
</feature>
<feature type="binding site" evidence="1">
    <location>
        <begin position="7"/>
        <end position="14"/>
    </location>
    <ligand>
        <name>ATP</name>
        <dbReference type="ChEBI" id="CHEBI:30616"/>
    </ligand>
</feature>
<reference key="1">
    <citation type="journal article" date="2009" name="Environ. Microbiol.">
        <title>Genome sequence of Desulfobacterium autotrophicum HRM2, a marine sulfate reducer oxidizing organic carbon completely to carbon dioxide.</title>
        <authorList>
            <person name="Strittmatter A.W."/>
            <person name="Liesegang H."/>
            <person name="Rabus R."/>
            <person name="Decker I."/>
            <person name="Amann J."/>
            <person name="Andres S."/>
            <person name="Henne A."/>
            <person name="Fricke W.F."/>
            <person name="Martinez-Arias R."/>
            <person name="Bartels D."/>
            <person name="Goesmann A."/>
            <person name="Krause L."/>
            <person name="Puehler A."/>
            <person name="Klenk H.P."/>
            <person name="Richter M."/>
            <person name="Schuler M."/>
            <person name="Gloeckner F.O."/>
            <person name="Meyerdierks A."/>
            <person name="Gottschalk G."/>
            <person name="Amann R."/>
        </authorList>
    </citation>
    <scope>NUCLEOTIDE SEQUENCE [LARGE SCALE GENOMIC DNA]</scope>
    <source>
        <strain>ATCC 43914 / DSM 3382 / VKM B-1955 / HRM2</strain>
    </source>
</reference>
<evidence type="ECO:0000255" key="1">
    <source>
        <dbReference type="HAMAP-Rule" id="MF_00165"/>
    </source>
</evidence>
<accession>C0QI33</accession>
<protein>
    <recommendedName>
        <fullName evidence="1">Thymidylate kinase</fullName>
        <ecNumber evidence="1">2.7.4.9</ecNumber>
    </recommendedName>
    <alternativeName>
        <fullName evidence="1">dTMP kinase</fullName>
    </alternativeName>
</protein>
<keyword id="KW-0067">ATP-binding</keyword>
<keyword id="KW-0418">Kinase</keyword>
<keyword id="KW-0545">Nucleotide biosynthesis</keyword>
<keyword id="KW-0547">Nucleotide-binding</keyword>
<keyword id="KW-1185">Reference proteome</keyword>
<keyword id="KW-0808">Transferase</keyword>
<dbReference type="EC" id="2.7.4.9" evidence="1"/>
<dbReference type="EMBL" id="CP001087">
    <property type="protein sequence ID" value="ACN15769.1"/>
    <property type="molecule type" value="Genomic_DNA"/>
</dbReference>
<dbReference type="RefSeq" id="WP_015904532.1">
    <property type="nucleotide sequence ID" value="NC_012108.1"/>
</dbReference>
<dbReference type="SMR" id="C0QI33"/>
<dbReference type="STRING" id="177437.HRM2_26750"/>
<dbReference type="KEGG" id="dat:HRM2_26750"/>
<dbReference type="eggNOG" id="COG0125">
    <property type="taxonomic scope" value="Bacteria"/>
</dbReference>
<dbReference type="HOGENOM" id="CLU_049131_0_2_7"/>
<dbReference type="OrthoDB" id="9774907at2"/>
<dbReference type="Proteomes" id="UP000000442">
    <property type="component" value="Chromosome"/>
</dbReference>
<dbReference type="GO" id="GO:0005829">
    <property type="term" value="C:cytosol"/>
    <property type="evidence" value="ECO:0007669"/>
    <property type="project" value="TreeGrafter"/>
</dbReference>
<dbReference type="GO" id="GO:0005524">
    <property type="term" value="F:ATP binding"/>
    <property type="evidence" value="ECO:0007669"/>
    <property type="project" value="UniProtKB-UniRule"/>
</dbReference>
<dbReference type="GO" id="GO:0004798">
    <property type="term" value="F:dTMP kinase activity"/>
    <property type="evidence" value="ECO:0007669"/>
    <property type="project" value="UniProtKB-UniRule"/>
</dbReference>
<dbReference type="GO" id="GO:0006233">
    <property type="term" value="P:dTDP biosynthetic process"/>
    <property type="evidence" value="ECO:0007669"/>
    <property type="project" value="InterPro"/>
</dbReference>
<dbReference type="GO" id="GO:0006235">
    <property type="term" value="P:dTTP biosynthetic process"/>
    <property type="evidence" value="ECO:0007669"/>
    <property type="project" value="UniProtKB-UniRule"/>
</dbReference>
<dbReference type="GO" id="GO:0006227">
    <property type="term" value="P:dUDP biosynthetic process"/>
    <property type="evidence" value="ECO:0007669"/>
    <property type="project" value="TreeGrafter"/>
</dbReference>
<dbReference type="CDD" id="cd01672">
    <property type="entry name" value="TMPK"/>
    <property type="match status" value="1"/>
</dbReference>
<dbReference type="FunFam" id="3.40.50.300:FF:000225">
    <property type="entry name" value="Thymidylate kinase"/>
    <property type="match status" value="1"/>
</dbReference>
<dbReference type="Gene3D" id="3.40.50.300">
    <property type="entry name" value="P-loop containing nucleotide triphosphate hydrolases"/>
    <property type="match status" value="1"/>
</dbReference>
<dbReference type="HAMAP" id="MF_00165">
    <property type="entry name" value="Thymidylate_kinase"/>
    <property type="match status" value="1"/>
</dbReference>
<dbReference type="InterPro" id="IPR027417">
    <property type="entry name" value="P-loop_NTPase"/>
</dbReference>
<dbReference type="InterPro" id="IPR039430">
    <property type="entry name" value="Thymidylate_kin-like_dom"/>
</dbReference>
<dbReference type="InterPro" id="IPR018094">
    <property type="entry name" value="Thymidylate_kinase"/>
</dbReference>
<dbReference type="NCBIfam" id="TIGR00041">
    <property type="entry name" value="DTMP_kinase"/>
    <property type="match status" value="1"/>
</dbReference>
<dbReference type="PANTHER" id="PTHR10344">
    <property type="entry name" value="THYMIDYLATE KINASE"/>
    <property type="match status" value="1"/>
</dbReference>
<dbReference type="PANTHER" id="PTHR10344:SF4">
    <property type="entry name" value="UMP-CMP KINASE 2, MITOCHONDRIAL"/>
    <property type="match status" value="1"/>
</dbReference>
<dbReference type="Pfam" id="PF02223">
    <property type="entry name" value="Thymidylate_kin"/>
    <property type="match status" value="1"/>
</dbReference>
<dbReference type="SUPFAM" id="SSF52540">
    <property type="entry name" value="P-loop containing nucleoside triphosphate hydrolases"/>
    <property type="match status" value="1"/>
</dbReference>